<reference key="1">
    <citation type="journal article" date="2008" name="Environ. Microbiol.">
        <title>The genome of Erwinia tasmaniensis strain Et1/99, a non-pathogenic bacterium in the genus Erwinia.</title>
        <authorList>
            <person name="Kube M."/>
            <person name="Migdoll A.M."/>
            <person name="Mueller I."/>
            <person name="Kuhl H."/>
            <person name="Beck A."/>
            <person name="Reinhardt R."/>
            <person name="Geider K."/>
        </authorList>
    </citation>
    <scope>NUCLEOTIDE SEQUENCE [LARGE SCALE GENOMIC DNA]</scope>
    <source>
        <strain>DSM 17950 / CFBP 7177 / CIP 109463 / NCPPB 4357 / Et1/99</strain>
    </source>
</reference>
<name>DARP_ERWT9</name>
<comment type="function">
    <text evidence="1">Member of a network of 50S ribosomal subunit biogenesis factors which assembles along the 30S-50S interface, preventing incorrect 23S rRNA structures from forming. Promotes peptidyl transferase center (PTC) maturation.</text>
</comment>
<comment type="subcellular location">
    <subcellularLocation>
        <location evidence="1">Cytoplasm</location>
    </subcellularLocation>
    <text evidence="1">Associates with late stage pre-50S ribosomal subunits.</text>
</comment>
<comment type="similarity">
    <text evidence="1">Belongs to the DarP family.</text>
</comment>
<protein>
    <recommendedName>
        <fullName evidence="1">Dual-action ribosomal maturation protein DarP</fullName>
    </recommendedName>
    <alternativeName>
        <fullName evidence="1">Large ribosomal subunit assembly factor DarP</fullName>
    </alternativeName>
</protein>
<sequence>MTKQPDEWLDDVPDNDEEDEEIIWVSKSEIKRDAEELKRLGAELMELGSNSLDRIPLDEDLRSAIELAQKIKKEGRRRQMQLIGKMLRSRDEEPIRTALDKLKNRHNQQVALFHKLEMMRDRLVEQGDEAVAEVLALYPNADRQQLRAMIRNAQKEKAGNKPPKAYRQIFQYLRELAEA</sequence>
<keyword id="KW-0963">Cytoplasm</keyword>
<keyword id="KW-1185">Reference proteome</keyword>
<keyword id="KW-0690">Ribosome biogenesis</keyword>
<keyword id="KW-0694">RNA-binding</keyword>
<keyword id="KW-0699">rRNA-binding</keyword>
<gene>
    <name evidence="1" type="primary">darP</name>
    <name type="ordered locus">ETA_29350</name>
</gene>
<organism>
    <name type="scientific">Erwinia tasmaniensis (strain DSM 17950 / CFBP 7177 / CIP 109463 / NCPPB 4357 / Et1/99)</name>
    <dbReference type="NCBI Taxonomy" id="465817"/>
    <lineage>
        <taxon>Bacteria</taxon>
        <taxon>Pseudomonadati</taxon>
        <taxon>Pseudomonadota</taxon>
        <taxon>Gammaproteobacteria</taxon>
        <taxon>Enterobacterales</taxon>
        <taxon>Erwiniaceae</taxon>
        <taxon>Erwinia</taxon>
    </lineage>
</organism>
<dbReference type="EMBL" id="CU468135">
    <property type="protein sequence ID" value="CAO97981.1"/>
    <property type="molecule type" value="Genomic_DNA"/>
</dbReference>
<dbReference type="RefSeq" id="WP_012442635.1">
    <property type="nucleotide sequence ID" value="NC_010694.1"/>
</dbReference>
<dbReference type="SMR" id="B2VD05"/>
<dbReference type="STRING" id="465817.ETA_29350"/>
<dbReference type="KEGG" id="eta:ETA_29350"/>
<dbReference type="eggNOG" id="COG3028">
    <property type="taxonomic scope" value="Bacteria"/>
</dbReference>
<dbReference type="HOGENOM" id="CLU_106757_2_0_6"/>
<dbReference type="OrthoDB" id="5293604at2"/>
<dbReference type="Proteomes" id="UP000001726">
    <property type="component" value="Chromosome"/>
</dbReference>
<dbReference type="GO" id="GO:0005829">
    <property type="term" value="C:cytosol"/>
    <property type="evidence" value="ECO:0007669"/>
    <property type="project" value="TreeGrafter"/>
</dbReference>
<dbReference type="GO" id="GO:0043022">
    <property type="term" value="F:ribosome binding"/>
    <property type="evidence" value="ECO:0007669"/>
    <property type="project" value="UniProtKB-UniRule"/>
</dbReference>
<dbReference type="GO" id="GO:0019843">
    <property type="term" value="F:rRNA binding"/>
    <property type="evidence" value="ECO:0007669"/>
    <property type="project" value="UniProtKB-UniRule"/>
</dbReference>
<dbReference type="GO" id="GO:1902626">
    <property type="term" value="P:assembly of large subunit precursor of preribosome"/>
    <property type="evidence" value="ECO:0007669"/>
    <property type="project" value="UniProtKB-UniRule"/>
</dbReference>
<dbReference type="CDD" id="cd16331">
    <property type="entry name" value="YjgA-like"/>
    <property type="match status" value="1"/>
</dbReference>
<dbReference type="FunFam" id="1.10.60.30:FF:000001">
    <property type="entry name" value="UPF0307 protein YjgA"/>
    <property type="match status" value="1"/>
</dbReference>
<dbReference type="FunFam" id="1.10.60.30:FF:000002">
    <property type="entry name" value="UPF0307 protein YjgA"/>
    <property type="match status" value="1"/>
</dbReference>
<dbReference type="Gene3D" id="1.10.60.30">
    <property type="entry name" value="PSPTO4464-like domains"/>
    <property type="match status" value="2"/>
</dbReference>
<dbReference type="HAMAP" id="MF_00765">
    <property type="entry name" value="DarP"/>
    <property type="match status" value="1"/>
</dbReference>
<dbReference type="InterPro" id="IPR006839">
    <property type="entry name" value="DarP"/>
</dbReference>
<dbReference type="InterPro" id="IPR023153">
    <property type="entry name" value="DarP_sf"/>
</dbReference>
<dbReference type="NCBIfam" id="NF003593">
    <property type="entry name" value="PRK05255.1-1"/>
    <property type="match status" value="1"/>
</dbReference>
<dbReference type="PANTHER" id="PTHR38101">
    <property type="entry name" value="UPF0307 PROTEIN YJGA"/>
    <property type="match status" value="1"/>
</dbReference>
<dbReference type="PANTHER" id="PTHR38101:SF1">
    <property type="entry name" value="UPF0307 PROTEIN YJGA"/>
    <property type="match status" value="1"/>
</dbReference>
<dbReference type="Pfam" id="PF04751">
    <property type="entry name" value="DarP"/>
    <property type="match status" value="1"/>
</dbReference>
<dbReference type="PIRSF" id="PIRSF016183">
    <property type="entry name" value="UCP016183"/>
    <property type="match status" value="1"/>
</dbReference>
<dbReference type="SUPFAM" id="SSF158710">
    <property type="entry name" value="PSPTO4464-like"/>
    <property type="match status" value="1"/>
</dbReference>
<accession>B2VD05</accession>
<proteinExistence type="inferred from homology"/>
<feature type="chain" id="PRO_1000198377" description="Dual-action ribosomal maturation protein DarP">
    <location>
        <begin position="1"/>
        <end position="179"/>
    </location>
</feature>
<evidence type="ECO:0000255" key="1">
    <source>
        <dbReference type="HAMAP-Rule" id="MF_00765"/>
    </source>
</evidence>